<gene>
    <name evidence="1" type="primary">fmt</name>
    <name type="ordered locus">MGAS10270_Spy1454</name>
</gene>
<protein>
    <recommendedName>
        <fullName evidence="1">Methionyl-tRNA formyltransferase</fullName>
        <ecNumber evidence="1">2.1.2.9</ecNumber>
    </recommendedName>
</protein>
<sequence>MIKLLFMGTPQFSATVLKGLLDNPAYEILGVVTQPDRAIGRKKVIKVTPVKQLALEHGISIYQPEKLSGSQELIEIMGLGADGIITAAFGQFLPTILLDSVSFAINVHASLLPKYRGGAPIHYAIMNGDKKAGVTIMEMIKEMDAGDMVAKASTPILETDNVGTLFEKLAIIGRDLLLDSLPAYLSGELKPIPQDHSQATFSPNISPEQEKLDWTMSNQEVFNHIRGMNPWPVAHTFLEGQRLKIYEAQLAEGEGLPGQVIVKTKKSLVIATGQGALSLIVVQPAGKPKMSIIDFLNGIGRKLEVGDIIGR</sequence>
<accession>Q1JFP0</accession>
<proteinExistence type="inferred from homology"/>
<keyword id="KW-0648">Protein biosynthesis</keyword>
<keyword id="KW-0808">Transferase</keyword>
<name>FMT_STRPD</name>
<reference key="1">
    <citation type="journal article" date="2006" name="Proc. Natl. Acad. Sci. U.S.A.">
        <title>Molecular genetic anatomy of inter- and intraserotype variation in the human bacterial pathogen group A Streptococcus.</title>
        <authorList>
            <person name="Beres S.B."/>
            <person name="Richter E.W."/>
            <person name="Nagiec M.J."/>
            <person name="Sumby P."/>
            <person name="Porcella S.F."/>
            <person name="DeLeo F.R."/>
            <person name="Musser J.M."/>
        </authorList>
    </citation>
    <scope>NUCLEOTIDE SEQUENCE [LARGE SCALE GENOMIC DNA]</scope>
    <source>
        <strain>MGAS10270</strain>
    </source>
</reference>
<dbReference type="EC" id="2.1.2.9" evidence="1"/>
<dbReference type="EMBL" id="CP000260">
    <property type="protein sequence ID" value="ABF34519.1"/>
    <property type="molecule type" value="Genomic_DNA"/>
</dbReference>
<dbReference type="SMR" id="Q1JFP0"/>
<dbReference type="KEGG" id="sph:MGAS10270_Spy1454"/>
<dbReference type="HOGENOM" id="CLU_033347_1_1_9"/>
<dbReference type="Proteomes" id="UP000002436">
    <property type="component" value="Chromosome"/>
</dbReference>
<dbReference type="GO" id="GO:0005829">
    <property type="term" value="C:cytosol"/>
    <property type="evidence" value="ECO:0007669"/>
    <property type="project" value="TreeGrafter"/>
</dbReference>
<dbReference type="GO" id="GO:0004479">
    <property type="term" value="F:methionyl-tRNA formyltransferase activity"/>
    <property type="evidence" value="ECO:0007669"/>
    <property type="project" value="UniProtKB-UniRule"/>
</dbReference>
<dbReference type="CDD" id="cd08646">
    <property type="entry name" value="FMT_core_Met-tRNA-FMT_N"/>
    <property type="match status" value="1"/>
</dbReference>
<dbReference type="CDD" id="cd08704">
    <property type="entry name" value="Met_tRNA_FMT_C"/>
    <property type="match status" value="1"/>
</dbReference>
<dbReference type="FunFam" id="3.40.50.170:FF:000004">
    <property type="entry name" value="Methionyl-tRNA formyltransferase"/>
    <property type="match status" value="1"/>
</dbReference>
<dbReference type="Gene3D" id="3.10.25.10">
    <property type="entry name" value="Formyl transferase, C-terminal domain"/>
    <property type="match status" value="1"/>
</dbReference>
<dbReference type="Gene3D" id="3.40.50.170">
    <property type="entry name" value="Formyl transferase, N-terminal domain"/>
    <property type="match status" value="1"/>
</dbReference>
<dbReference type="HAMAP" id="MF_00182">
    <property type="entry name" value="Formyl_trans"/>
    <property type="match status" value="1"/>
</dbReference>
<dbReference type="InterPro" id="IPR005794">
    <property type="entry name" value="Fmt"/>
</dbReference>
<dbReference type="InterPro" id="IPR005793">
    <property type="entry name" value="Formyl_trans_C"/>
</dbReference>
<dbReference type="InterPro" id="IPR037022">
    <property type="entry name" value="Formyl_trans_C_sf"/>
</dbReference>
<dbReference type="InterPro" id="IPR002376">
    <property type="entry name" value="Formyl_transf_N"/>
</dbReference>
<dbReference type="InterPro" id="IPR036477">
    <property type="entry name" value="Formyl_transf_N_sf"/>
</dbReference>
<dbReference type="InterPro" id="IPR011034">
    <property type="entry name" value="Formyl_transferase-like_C_sf"/>
</dbReference>
<dbReference type="InterPro" id="IPR001555">
    <property type="entry name" value="GART_AS"/>
</dbReference>
<dbReference type="InterPro" id="IPR044135">
    <property type="entry name" value="Met-tRNA-FMT_C"/>
</dbReference>
<dbReference type="InterPro" id="IPR041711">
    <property type="entry name" value="Met-tRNA-FMT_N"/>
</dbReference>
<dbReference type="NCBIfam" id="TIGR00460">
    <property type="entry name" value="fmt"/>
    <property type="match status" value="1"/>
</dbReference>
<dbReference type="PANTHER" id="PTHR11138">
    <property type="entry name" value="METHIONYL-TRNA FORMYLTRANSFERASE"/>
    <property type="match status" value="1"/>
</dbReference>
<dbReference type="PANTHER" id="PTHR11138:SF5">
    <property type="entry name" value="METHIONYL-TRNA FORMYLTRANSFERASE, MITOCHONDRIAL"/>
    <property type="match status" value="1"/>
</dbReference>
<dbReference type="Pfam" id="PF02911">
    <property type="entry name" value="Formyl_trans_C"/>
    <property type="match status" value="1"/>
</dbReference>
<dbReference type="Pfam" id="PF00551">
    <property type="entry name" value="Formyl_trans_N"/>
    <property type="match status" value="1"/>
</dbReference>
<dbReference type="SUPFAM" id="SSF50486">
    <property type="entry name" value="FMT C-terminal domain-like"/>
    <property type="match status" value="1"/>
</dbReference>
<dbReference type="SUPFAM" id="SSF53328">
    <property type="entry name" value="Formyltransferase"/>
    <property type="match status" value="1"/>
</dbReference>
<dbReference type="PROSITE" id="PS00373">
    <property type="entry name" value="GART"/>
    <property type="match status" value="1"/>
</dbReference>
<organism>
    <name type="scientific">Streptococcus pyogenes serotype M2 (strain MGAS10270)</name>
    <dbReference type="NCBI Taxonomy" id="370552"/>
    <lineage>
        <taxon>Bacteria</taxon>
        <taxon>Bacillati</taxon>
        <taxon>Bacillota</taxon>
        <taxon>Bacilli</taxon>
        <taxon>Lactobacillales</taxon>
        <taxon>Streptococcaceae</taxon>
        <taxon>Streptococcus</taxon>
    </lineage>
</organism>
<comment type="function">
    <text evidence="1">Attaches a formyl group to the free amino group of methionyl-tRNA(fMet). The formyl group appears to play a dual role in the initiator identity of N-formylmethionyl-tRNA by promoting its recognition by IF2 and preventing the misappropriation of this tRNA by the elongation apparatus.</text>
</comment>
<comment type="catalytic activity">
    <reaction evidence="1">
        <text>L-methionyl-tRNA(fMet) + (6R)-10-formyltetrahydrofolate = N-formyl-L-methionyl-tRNA(fMet) + (6S)-5,6,7,8-tetrahydrofolate + H(+)</text>
        <dbReference type="Rhea" id="RHEA:24380"/>
        <dbReference type="Rhea" id="RHEA-COMP:9952"/>
        <dbReference type="Rhea" id="RHEA-COMP:9953"/>
        <dbReference type="ChEBI" id="CHEBI:15378"/>
        <dbReference type="ChEBI" id="CHEBI:57453"/>
        <dbReference type="ChEBI" id="CHEBI:78530"/>
        <dbReference type="ChEBI" id="CHEBI:78844"/>
        <dbReference type="ChEBI" id="CHEBI:195366"/>
        <dbReference type="EC" id="2.1.2.9"/>
    </reaction>
</comment>
<comment type="similarity">
    <text evidence="1">Belongs to the Fmt family.</text>
</comment>
<evidence type="ECO:0000255" key="1">
    <source>
        <dbReference type="HAMAP-Rule" id="MF_00182"/>
    </source>
</evidence>
<feature type="chain" id="PRO_1000020179" description="Methionyl-tRNA formyltransferase">
    <location>
        <begin position="1"/>
        <end position="311"/>
    </location>
</feature>
<feature type="binding site" evidence="1">
    <location>
        <begin position="110"/>
        <end position="113"/>
    </location>
    <ligand>
        <name>(6S)-5,6,7,8-tetrahydrofolate</name>
        <dbReference type="ChEBI" id="CHEBI:57453"/>
    </ligand>
</feature>